<feature type="chain" id="PRO_0000189756" description="Gamma-glutamyl phosphate reductase">
    <location>
        <begin position="1"/>
        <end position="420"/>
    </location>
</feature>
<gene>
    <name evidence="1" type="primary">proA</name>
    <name type="ordered locus">NMB1068</name>
</gene>
<comment type="function">
    <text evidence="1">Catalyzes the NADPH-dependent reduction of L-glutamate 5-phosphate into L-glutamate 5-semialdehyde and phosphate. The product spontaneously undergoes cyclization to form 1-pyrroline-5-carboxylate.</text>
</comment>
<comment type="catalytic activity">
    <reaction evidence="1">
        <text>L-glutamate 5-semialdehyde + phosphate + NADP(+) = L-glutamyl 5-phosphate + NADPH + H(+)</text>
        <dbReference type="Rhea" id="RHEA:19541"/>
        <dbReference type="ChEBI" id="CHEBI:15378"/>
        <dbReference type="ChEBI" id="CHEBI:43474"/>
        <dbReference type="ChEBI" id="CHEBI:57783"/>
        <dbReference type="ChEBI" id="CHEBI:58066"/>
        <dbReference type="ChEBI" id="CHEBI:58274"/>
        <dbReference type="ChEBI" id="CHEBI:58349"/>
        <dbReference type="EC" id="1.2.1.41"/>
    </reaction>
</comment>
<comment type="pathway">
    <text evidence="1">Amino-acid biosynthesis; L-proline biosynthesis; L-glutamate 5-semialdehyde from L-glutamate: step 2/2.</text>
</comment>
<comment type="subcellular location">
    <subcellularLocation>
        <location evidence="1">Cytoplasm</location>
    </subcellularLocation>
</comment>
<comment type="similarity">
    <text evidence="1">Belongs to the gamma-glutamyl phosphate reductase family.</text>
</comment>
<organism>
    <name type="scientific">Neisseria meningitidis serogroup B (strain ATCC BAA-335 / MC58)</name>
    <dbReference type="NCBI Taxonomy" id="122586"/>
    <lineage>
        <taxon>Bacteria</taxon>
        <taxon>Pseudomonadati</taxon>
        <taxon>Pseudomonadota</taxon>
        <taxon>Betaproteobacteria</taxon>
        <taxon>Neisseriales</taxon>
        <taxon>Neisseriaceae</taxon>
        <taxon>Neisseria</taxon>
    </lineage>
</organism>
<proteinExistence type="inferred from homology"/>
<evidence type="ECO:0000255" key="1">
    <source>
        <dbReference type="HAMAP-Rule" id="MF_00412"/>
    </source>
</evidence>
<dbReference type="EC" id="1.2.1.41" evidence="1"/>
<dbReference type="EMBL" id="AE002098">
    <property type="protein sequence ID" value="AAF62324.1"/>
    <property type="molecule type" value="Genomic_DNA"/>
</dbReference>
<dbReference type="RefSeq" id="NP_274101.1">
    <property type="nucleotide sequence ID" value="NC_003112.2"/>
</dbReference>
<dbReference type="RefSeq" id="WP_002244113.1">
    <property type="nucleotide sequence ID" value="NC_003112.2"/>
</dbReference>
<dbReference type="SMR" id="Q9JZG3"/>
<dbReference type="FunCoup" id="Q9JZG3">
    <property type="interactions" value="400"/>
</dbReference>
<dbReference type="STRING" id="122586.NMB1068"/>
<dbReference type="PaxDb" id="122586-NMB1068"/>
<dbReference type="KEGG" id="nme:NMB1068"/>
<dbReference type="PATRIC" id="fig|122586.8.peg.1359"/>
<dbReference type="HOGENOM" id="CLU_030231_0_0_4"/>
<dbReference type="InParanoid" id="Q9JZG3"/>
<dbReference type="OrthoDB" id="9809970at2"/>
<dbReference type="UniPathway" id="UPA00098">
    <property type="reaction ID" value="UER00360"/>
</dbReference>
<dbReference type="Proteomes" id="UP000000425">
    <property type="component" value="Chromosome"/>
</dbReference>
<dbReference type="GO" id="GO:0005737">
    <property type="term" value="C:cytoplasm"/>
    <property type="evidence" value="ECO:0007669"/>
    <property type="project" value="UniProtKB-SubCell"/>
</dbReference>
<dbReference type="GO" id="GO:0004350">
    <property type="term" value="F:glutamate-5-semialdehyde dehydrogenase activity"/>
    <property type="evidence" value="ECO:0000318"/>
    <property type="project" value="GO_Central"/>
</dbReference>
<dbReference type="GO" id="GO:0050661">
    <property type="term" value="F:NADP binding"/>
    <property type="evidence" value="ECO:0007669"/>
    <property type="project" value="InterPro"/>
</dbReference>
<dbReference type="GO" id="GO:0055129">
    <property type="term" value="P:L-proline biosynthetic process"/>
    <property type="evidence" value="ECO:0007669"/>
    <property type="project" value="UniProtKB-UniRule"/>
</dbReference>
<dbReference type="CDD" id="cd07079">
    <property type="entry name" value="ALDH_F18-19_ProA-GPR"/>
    <property type="match status" value="1"/>
</dbReference>
<dbReference type="FunFam" id="3.40.309.10:FF:000006">
    <property type="entry name" value="Gamma-glutamyl phosphate reductase"/>
    <property type="match status" value="1"/>
</dbReference>
<dbReference type="Gene3D" id="3.40.605.10">
    <property type="entry name" value="Aldehyde Dehydrogenase, Chain A, domain 1"/>
    <property type="match status" value="1"/>
</dbReference>
<dbReference type="Gene3D" id="3.40.309.10">
    <property type="entry name" value="Aldehyde Dehydrogenase, Chain A, domain 2"/>
    <property type="match status" value="1"/>
</dbReference>
<dbReference type="HAMAP" id="MF_00412">
    <property type="entry name" value="ProA"/>
    <property type="match status" value="1"/>
</dbReference>
<dbReference type="InterPro" id="IPR016161">
    <property type="entry name" value="Ald_DH/histidinol_DH"/>
</dbReference>
<dbReference type="InterPro" id="IPR016163">
    <property type="entry name" value="Ald_DH_C"/>
</dbReference>
<dbReference type="InterPro" id="IPR016162">
    <property type="entry name" value="Ald_DH_N"/>
</dbReference>
<dbReference type="InterPro" id="IPR015590">
    <property type="entry name" value="Aldehyde_DH_dom"/>
</dbReference>
<dbReference type="InterPro" id="IPR020593">
    <property type="entry name" value="G-glutamylP_reductase_CS"/>
</dbReference>
<dbReference type="InterPro" id="IPR012134">
    <property type="entry name" value="Glu-5-SA_DH"/>
</dbReference>
<dbReference type="InterPro" id="IPR000965">
    <property type="entry name" value="GPR_dom"/>
</dbReference>
<dbReference type="NCBIfam" id="NF001221">
    <property type="entry name" value="PRK00197.1"/>
    <property type="match status" value="1"/>
</dbReference>
<dbReference type="NCBIfam" id="TIGR00407">
    <property type="entry name" value="proA"/>
    <property type="match status" value="1"/>
</dbReference>
<dbReference type="PANTHER" id="PTHR11063:SF8">
    <property type="entry name" value="DELTA-1-PYRROLINE-5-CARBOXYLATE SYNTHASE"/>
    <property type="match status" value="1"/>
</dbReference>
<dbReference type="PANTHER" id="PTHR11063">
    <property type="entry name" value="GLUTAMATE SEMIALDEHYDE DEHYDROGENASE"/>
    <property type="match status" value="1"/>
</dbReference>
<dbReference type="Pfam" id="PF00171">
    <property type="entry name" value="Aldedh"/>
    <property type="match status" value="1"/>
</dbReference>
<dbReference type="PIRSF" id="PIRSF000151">
    <property type="entry name" value="GPR"/>
    <property type="match status" value="1"/>
</dbReference>
<dbReference type="SUPFAM" id="SSF53720">
    <property type="entry name" value="ALDH-like"/>
    <property type="match status" value="1"/>
</dbReference>
<dbReference type="PROSITE" id="PS01223">
    <property type="entry name" value="PROA"/>
    <property type="match status" value="1"/>
</dbReference>
<reference key="1">
    <citation type="journal article" date="2000" name="Science">
        <title>Complete genome sequence of Neisseria meningitidis serogroup B strain MC58.</title>
        <authorList>
            <person name="Tettelin H."/>
            <person name="Saunders N.J."/>
            <person name="Heidelberg J.F."/>
            <person name="Jeffries A.C."/>
            <person name="Nelson K.E."/>
            <person name="Eisen J.A."/>
            <person name="Ketchum K.A."/>
            <person name="Hood D.W."/>
            <person name="Peden J.F."/>
            <person name="Dodson R.J."/>
            <person name="Nelson W.C."/>
            <person name="Gwinn M.L."/>
            <person name="DeBoy R.T."/>
            <person name="Peterson J.D."/>
            <person name="Hickey E.K."/>
            <person name="Haft D.H."/>
            <person name="Salzberg S.L."/>
            <person name="White O."/>
            <person name="Fleischmann R.D."/>
            <person name="Dougherty B.A."/>
            <person name="Mason T.M."/>
            <person name="Ciecko A."/>
            <person name="Parksey D.S."/>
            <person name="Blair E."/>
            <person name="Cittone H."/>
            <person name="Clark E.B."/>
            <person name="Cotton M.D."/>
            <person name="Utterback T.R."/>
            <person name="Khouri H.M."/>
            <person name="Qin H."/>
            <person name="Vamathevan J.J."/>
            <person name="Gill J."/>
            <person name="Scarlato V."/>
            <person name="Masignani V."/>
            <person name="Pizza M."/>
            <person name="Grandi G."/>
            <person name="Sun L."/>
            <person name="Smith H.O."/>
            <person name="Fraser C.M."/>
            <person name="Moxon E.R."/>
            <person name="Rappuoli R."/>
            <person name="Venter J.C."/>
        </authorList>
    </citation>
    <scope>NUCLEOTIDE SEQUENCE [LARGE SCALE GENOMIC DNA]</scope>
    <source>
        <strain>ATCC BAA-335 / MC58</strain>
    </source>
</reference>
<accession>Q9JZG3</accession>
<keyword id="KW-0028">Amino-acid biosynthesis</keyword>
<keyword id="KW-0963">Cytoplasm</keyword>
<keyword id="KW-0521">NADP</keyword>
<keyword id="KW-0560">Oxidoreductase</keyword>
<keyword id="KW-0641">Proline biosynthesis</keyword>
<keyword id="KW-1185">Reference proteome</keyword>
<protein>
    <recommendedName>
        <fullName evidence="1">Gamma-glutamyl phosphate reductase</fullName>
        <shortName evidence="1">GPR</shortName>
        <ecNumber evidence="1">1.2.1.41</ecNumber>
    </recommendedName>
    <alternativeName>
        <fullName evidence="1">Glutamate-5-semialdehyde dehydrogenase</fullName>
    </alternativeName>
    <alternativeName>
        <fullName evidence="1">Glutamyl-gamma-semialdehyde dehydrogenase</fullName>
        <shortName evidence="1">GSA dehydrogenase</shortName>
    </alternativeName>
</protein>
<name>PROA_NEIMB</name>
<sequence>MSNTQKQLALAKAAKKSVNTADTEEKNRALLAMADSLEAATADILAANRQDLEAAAGNIPESMTDRLLLDGKRICAMADGIRAVAALPNPVGEILETSTLPNGLEIVKKRVAMGVIGIIYESRPNVTSDAAALALKSGSAVVLRSGKDAFQSARAIVAALKTGLAQTRIDPDALQLIEDTGRESSYEMMRAKDYLDLLIPRGGAGLIRAVVENAVVPVIETGTGIVHIYIDKDADWDKALRIVYNAKTSRPSVCNSMEVLLVHEDIAADFLPKLERLLVRDRIEAGLPPIRFRLDPQAARHIGGEAAGADDFDTEFLDYILAVKTVASVEEAVWHIETHSTHHSDGIVTENRHAADYFTTHIDSAAVYVNASTRFTDGGEFGLGCEMGISTQKLHARGPMGLKELTSYKYIVQGTGQVRE</sequence>